<feature type="chain" id="PRO_0000456317" description="Druantia protein DruD">
    <location>
        <begin position="1"/>
        <end position="347"/>
    </location>
</feature>
<proteinExistence type="predicted"/>
<keyword id="KW-0051">Antiviral defense</keyword>
<keyword id="KW-0963">Cytoplasm</keyword>
<name>DRUD_ECOU4</name>
<comment type="function">
    <text evidence="1">Component of antiviral defense system Druantia type I, composed of DruA, DruB, DruC, DruD and DruE. Expression of Druantia in E.coli (strain MG1655) confers resistance to phage lambda, SECphi18, SECphi27 and T4.</text>
</comment>
<comment type="subcellular location">
    <subcellularLocation>
        <location evidence="3">Cytoplasm</location>
    </subcellularLocation>
</comment>
<comment type="disruption phenotype">
    <text evidence="1">When this gene is missing the Druantia system does not confer resistance to SECphi27 in E.coli.</text>
</comment>
<organism>
    <name type="scientific">Escherichia coli (strain UMEA 4076-1)</name>
    <dbReference type="NCBI Taxonomy" id="1281278"/>
    <lineage>
        <taxon>Bacteria</taxon>
        <taxon>Pseudomonadati</taxon>
        <taxon>Pseudomonadota</taxon>
        <taxon>Gammaproteobacteria</taxon>
        <taxon>Enterobacterales</taxon>
        <taxon>Enterobacteriaceae</taxon>
        <taxon>Escherichia</taxon>
    </lineage>
</organism>
<sequence>MEWRAVSRDKALDMLSTALNCRFDDEGLRISAVSECLRSVLYQYSISETEEARQTVTSLRLTSAVRRKLVPLWPDIADIDNAIHPGIMSILNSLAELGDMIKLEGGNWLTAPPHAVRIDNKMAVFFGGEPSCTFSTGVVAKSAGRVRLVEEKVCTGSVEIWDANEWIGAPAEGNEEWSSRLLSGTISGFIDAPSNMSETTAYVRGKWLHLSELSFNKKQIYLCRMSVDNHFSYYLGEIEAGRLCRMNSLESSDDVRRLRFFLDTKDNCPLKIRIKISNGLARLRLTRRLPRRETKVLLLGWRESGFENEHSGITHHVFPEEILPIVRSAFEGLGIIWINEFTRRNEI</sequence>
<accession>P0DW37</accession>
<dbReference type="EMBL" id="AWEM01000032">
    <property type="protein sequence ID" value="ERA40832.1"/>
    <property type="molecule type" value="Genomic_DNA"/>
</dbReference>
<dbReference type="RefSeq" id="WP_000455181.1">
    <property type="nucleotide sequence ID" value="NZ_KE702725.1"/>
</dbReference>
<dbReference type="GO" id="GO:0005737">
    <property type="term" value="C:cytoplasm"/>
    <property type="evidence" value="ECO:0007669"/>
    <property type="project" value="UniProtKB-SubCell"/>
</dbReference>
<dbReference type="GO" id="GO:0051607">
    <property type="term" value="P:defense response to virus"/>
    <property type="evidence" value="ECO:0007669"/>
    <property type="project" value="UniProtKB-KW"/>
</dbReference>
<evidence type="ECO:0000269" key="1">
    <source>
    </source>
</evidence>
<evidence type="ECO:0000303" key="2">
    <source>
    </source>
</evidence>
<evidence type="ECO:0000305" key="3"/>
<evidence type="ECO:0000312" key="4">
    <source>
        <dbReference type="EMBL" id="ERA40832.1"/>
    </source>
</evidence>
<protein>
    <recommendedName>
        <fullName evidence="2">Druantia protein DruD</fullName>
    </recommendedName>
</protein>
<gene>
    <name evidence="2" type="primary">druD</name>
    <name evidence="4" type="ORF">H003_04357</name>
</gene>
<reference key="1">
    <citation type="submission" date="2013-07" db="EMBL/GenBank/DDBJ databases">
        <title>The Genome Sequence of Escherichia coli UMEA 4076-1.</title>
        <authorList>
            <consortium name="The Broad Institute Genome Sequencing Platform"/>
            <consortium name="The Broad Institute Genome Sequencing Center for Infectious Disease"/>
            <person name="Feldgarden M."/>
            <person name="Frimodt-Moller N."/>
            <person name="Leihof R.F."/>
            <person name="Rasmussen L."/>
            <person name="Young S.K."/>
            <person name="Zeng Q."/>
            <person name="Gargeya S."/>
            <person name="Abouelleil A."/>
            <person name="Alvarado L."/>
            <person name="Berlin A.M."/>
            <person name="Chapman S.B."/>
            <person name="Gainer-Dewar J."/>
            <person name="Goldberg J."/>
            <person name="Gnerre S."/>
            <person name="Griggs A."/>
            <person name="Gujja S."/>
            <person name="Hansen M."/>
            <person name="Howarth C."/>
            <person name="Imamovic A."/>
            <person name="Larimer J."/>
            <person name="McCowan C."/>
            <person name="Murphy C."/>
            <person name="Pearson M."/>
            <person name="Poon T."/>
            <person name="Priest M."/>
            <person name="Roberts A."/>
            <person name="Saif S."/>
            <person name="Shea T."/>
            <person name="Sykes S."/>
            <person name="Wortman J."/>
            <person name="Nusbaum C."/>
            <person name="Birren B."/>
        </authorList>
    </citation>
    <scope>NUCLEOTIDE SEQUENCE [LARGE SCALE GENOMIC DNA]</scope>
    <source>
        <strain>UMEA 4076-1</strain>
    </source>
</reference>
<reference key="2">
    <citation type="journal article" date="2018" name="Science">
        <title>Systematic discovery of antiphage defense systems in the microbial pangenome.</title>
        <authorList>
            <person name="Doron S."/>
            <person name="Melamed S."/>
            <person name="Ofir G."/>
            <person name="Leavitt A."/>
            <person name="Lopatina A."/>
            <person name="Keren M."/>
            <person name="Amitai G."/>
            <person name="Sorek R."/>
        </authorList>
    </citation>
    <scope>FUNCTION</scope>
    <scope>DISRUPTION PHENOTYPE</scope>
    <source>
        <strain>UMEA 4076-1</strain>
    </source>
</reference>